<evidence type="ECO:0000255" key="1">
    <source>
        <dbReference type="HAMAP-Rule" id="MF_00413"/>
    </source>
</evidence>
<feature type="chain" id="PRO_1000050028" description="Sulfur carrier protein TusA">
    <location>
        <begin position="1"/>
        <end position="81"/>
    </location>
</feature>
<feature type="active site" description="Cysteine persulfide intermediate" evidence="1">
    <location>
        <position position="19"/>
    </location>
</feature>
<dbReference type="EMBL" id="CP000469">
    <property type="protein sequence ID" value="ABK46266.1"/>
    <property type="molecule type" value="Genomic_DNA"/>
</dbReference>
<dbReference type="RefSeq" id="WP_011715314.1">
    <property type="nucleotide sequence ID" value="NC_008577.1"/>
</dbReference>
<dbReference type="SMR" id="A0KR47"/>
<dbReference type="STRING" id="94122.Shewana3_0021"/>
<dbReference type="KEGG" id="shn:Shewana3_0021"/>
<dbReference type="eggNOG" id="COG0425">
    <property type="taxonomic scope" value="Bacteria"/>
</dbReference>
<dbReference type="HOGENOM" id="CLU_165255_5_0_6"/>
<dbReference type="OrthoDB" id="9797352at2"/>
<dbReference type="Proteomes" id="UP000002589">
    <property type="component" value="Chromosome"/>
</dbReference>
<dbReference type="GO" id="GO:0005737">
    <property type="term" value="C:cytoplasm"/>
    <property type="evidence" value="ECO:0007669"/>
    <property type="project" value="UniProtKB-SubCell"/>
</dbReference>
<dbReference type="GO" id="GO:0097163">
    <property type="term" value="F:sulfur carrier activity"/>
    <property type="evidence" value="ECO:0007669"/>
    <property type="project" value="UniProtKB-UniRule"/>
</dbReference>
<dbReference type="GO" id="GO:0002143">
    <property type="term" value="P:tRNA wobble position uridine thiolation"/>
    <property type="evidence" value="ECO:0007669"/>
    <property type="project" value="InterPro"/>
</dbReference>
<dbReference type="CDD" id="cd03423">
    <property type="entry name" value="SirA"/>
    <property type="match status" value="1"/>
</dbReference>
<dbReference type="Gene3D" id="3.30.110.40">
    <property type="entry name" value="TusA-like domain"/>
    <property type="match status" value="1"/>
</dbReference>
<dbReference type="HAMAP" id="MF_00413">
    <property type="entry name" value="Thiourid_synth_A"/>
    <property type="match status" value="1"/>
</dbReference>
<dbReference type="InterPro" id="IPR022931">
    <property type="entry name" value="Sulphur_carrier_TusA"/>
</dbReference>
<dbReference type="InterPro" id="IPR001455">
    <property type="entry name" value="TusA-like"/>
</dbReference>
<dbReference type="InterPro" id="IPR036868">
    <property type="entry name" value="TusA-like_sf"/>
</dbReference>
<dbReference type="NCBIfam" id="NF001423">
    <property type="entry name" value="PRK00299.1"/>
    <property type="match status" value="1"/>
</dbReference>
<dbReference type="PANTHER" id="PTHR33279:SF2">
    <property type="entry name" value="SULFUR CARRIER PROTEIN TUSA"/>
    <property type="match status" value="1"/>
</dbReference>
<dbReference type="PANTHER" id="PTHR33279">
    <property type="entry name" value="SULFUR CARRIER PROTEIN YEDF-RELATED"/>
    <property type="match status" value="1"/>
</dbReference>
<dbReference type="Pfam" id="PF01206">
    <property type="entry name" value="TusA"/>
    <property type="match status" value="1"/>
</dbReference>
<dbReference type="SUPFAM" id="SSF64307">
    <property type="entry name" value="SirA-like"/>
    <property type="match status" value="1"/>
</dbReference>
<dbReference type="PROSITE" id="PS01148">
    <property type="entry name" value="UPF0033"/>
    <property type="match status" value="1"/>
</dbReference>
<proteinExistence type="inferred from homology"/>
<comment type="function">
    <text evidence="1">Sulfur carrier protein which probably makes part of a sulfur-relay system.</text>
</comment>
<comment type="subcellular location">
    <subcellularLocation>
        <location evidence="1">Cytoplasm</location>
    </subcellularLocation>
</comment>
<comment type="similarity">
    <text evidence="1">Belongs to the sulfur carrier protein TusA family.</text>
</comment>
<name>TUSA_SHESA</name>
<organism>
    <name type="scientific">Shewanella sp. (strain ANA-3)</name>
    <dbReference type="NCBI Taxonomy" id="94122"/>
    <lineage>
        <taxon>Bacteria</taxon>
        <taxon>Pseudomonadati</taxon>
        <taxon>Pseudomonadota</taxon>
        <taxon>Gammaproteobacteria</taxon>
        <taxon>Alteromonadales</taxon>
        <taxon>Shewanellaceae</taxon>
        <taxon>Shewanella</taxon>
    </lineage>
</organism>
<gene>
    <name evidence="1" type="primary">tusA</name>
    <name type="ordered locus">Shewana3_0021</name>
</gene>
<protein>
    <recommendedName>
        <fullName evidence="1">Sulfur carrier protein TusA</fullName>
    </recommendedName>
</protein>
<sequence>MNDVFSTAQHKLDALGLRCPEPVMMVRKTVRQMAQGETLLIIADDPATTRDIPSFCEFMDHTLVASETSQTPYQYLIKKGL</sequence>
<accession>A0KR47</accession>
<keyword id="KW-0963">Cytoplasm</keyword>
<reference key="1">
    <citation type="submission" date="2006-09" db="EMBL/GenBank/DDBJ databases">
        <title>Complete sequence of chromosome 1 of Shewanella sp. ANA-3.</title>
        <authorList>
            <person name="Copeland A."/>
            <person name="Lucas S."/>
            <person name="Lapidus A."/>
            <person name="Barry K."/>
            <person name="Detter J.C."/>
            <person name="Glavina del Rio T."/>
            <person name="Hammon N."/>
            <person name="Israni S."/>
            <person name="Dalin E."/>
            <person name="Tice H."/>
            <person name="Pitluck S."/>
            <person name="Chertkov O."/>
            <person name="Brettin T."/>
            <person name="Bruce D."/>
            <person name="Han C."/>
            <person name="Tapia R."/>
            <person name="Gilna P."/>
            <person name="Schmutz J."/>
            <person name="Larimer F."/>
            <person name="Land M."/>
            <person name="Hauser L."/>
            <person name="Kyrpides N."/>
            <person name="Kim E."/>
            <person name="Newman D."/>
            <person name="Salticov C."/>
            <person name="Konstantinidis K."/>
            <person name="Klappenback J."/>
            <person name="Tiedje J."/>
            <person name="Richardson P."/>
        </authorList>
    </citation>
    <scope>NUCLEOTIDE SEQUENCE [LARGE SCALE GENOMIC DNA]</scope>
    <source>
        <strain>ANA-3</strain>
    </source>
</reference>